<evidence type="ECO:0000255" key="1">
    <source>
        <dbReference type="HAMAP-Rule" id="MF_01022"/>
    </source>
</evidence>
<name>HIS7_SALTI</name>
<sequence length="355" mass="40164">MSQKYLFIDRDGTLISEPPSDFQVDHFDKLAFEPEVIPVLLKLQKAGFKLVMITNQDGLGTQSFPQADFDGPHNLMMQIFTSQGVCFDEVLICPHLPADDCDCRKPKVKLVERYLAEQAMDSANSYVIGDRATDIQLADNMGITGLRYHRETLNWTMIGEQLTKRDRYAHVVRNTKETQIDVSVWLDREGNSKINTGVGFFDHMLDQIATHGGFRMEITVKGDLYIDDHHTVEDTGLALGEALKLALGDKRGICRFGFVLPMDECLARCALDISGRPHLEYKAEFTYQRVGDLSTEMIEHFFRSLSYTMGVTLHLKTKGKNDHHRVESLFKAFGRTLRQAIRVEGDTLPSSKGVL</sequence>
<keyword id="KW-0028">Amino-acid biosynthesis</keyword>
<keyword id="KW-0963">Cytoplasm</keyword>
<keyword id="KW-0368">Histidine biosynthesis</keyword>
<keyword id="KW-0378">Hydrolase</keyword>
<keyword id="KW-0456">Lyase</keyword>
<keyword id="KW-0460">Magnesium</keyword>
<keyword id="KW-0479">Metal-binding</keyword>
<keyword id="KW-0511">Multifunctional enzyme</keyword>
<keyword id="KW-0862">Zinc</keyword>
<accession>Q8Z5J8</accession>
<organism>
    <name type="scientific">Salmonella typhi</name>
    <dbReference type="NCBI Taxonomy" id="90370"/>
    <lineage>
        <taxon>Bacteria</taxon>
        <taxon>Pseudomonadati</taxon>
        <taxon>Pseudomonadota</taxon>
        <taxon>Gammaproteobacteria</taxon>
        <taxon>Enterobacterales</taxon>
        <taxon>Enterobacteriaceae</taxon>
        <taxon>Salmonella</taxon>
    </lineage>
</organism>
<reference key="1">
    <citation type="journal article" date="2001" name="Nature">
        <title>Complete genome sequence of a multiple drug resistant Salmonella enterica serovar Typhi CT18.</title>
        <authorList>
            <person name="Parkhill J."/>
            <person name="Dougan G."/>
            <person name="James K.D."/>
            <person name="Thomson N.R."/>
            <person name="Pickard D."/>
            <person name="Wain J."/>
            <person name="Churcher C.M."/>
            <person name="Mungall K.L."/>
            <person name="Bentley S.D."/>
            <person name="Holden M.T.G."/>
            <person name="Sebaihia M."/>
            <person name="Baker S."/>
            <person name="Basham D."/>
            <person name="Brooks K."/>
            <person name="Chillingworth T."/>
            <person name="Connerton P."/>
            <person name="Cronin A."/>
            <person name="Davis P."/>
            <person name="Davies R.M."/>
            <person name="Dowd L."/>
            <person name="White N."/>
            <person name="Farrar J."/>
            <person name="Feltwell T."/>
            <person name="Hamlin N."/>
            <person name="Haque A."/>
            <person name="Hien T.T."/>
            <person name="Holroyd S."/>
            <person name="Jagels K."/>
            <person name="Krogh A."/>
            <person name="Larsen T.S."/>
            <person name="Leather S."/>
            <person name="Moule S."/>
            <person name="O'Gaora P."/>
            <person name="Parry C."/>
            <person name="Quail M.A."/>
            <person name="Rutherford K.M."/>
            <person name="Simmonds M."/>
            <person name="Skelton J."/>
            <person name="Stevens K."/>
            <person name="Whitehead S."/>
            <person name="Barrell B.G."/>
        </authorList>
    </citation>
    <scope>NUCLEOTIDE SEQUENCE [LARGE SCALE GENOMIC DNA]</scope>
    <source>
        <strain>CT18</strain>
    </source>
</reference>
<reference key="2">
    <citation type="journal article" date="2003" name="J. Bacteriol.">
        <title>Comparative genomics of Salmonella enterica serovar Typhi strains Ty2 and CT18.</title>
        <authorList>
            <person name="Deng W."/>
            <person name="Liou S.-R."/>
            <person name="Plunkett G. III"/>
            <person name="Mayhew G.F."/>
            <person name="Rose D.J."/>
            <person name="Burland V."/>
            <person name="Kodoyianni V."/>
            <person name="Schwartz D.C."/>
            <person name="Blattner F.R."/>
        </authorList>
    </citation>
    <scope>NUCLEOTIDE SEQUENCE [LARGE SCALE GENOMIC DNA]</scope>
    <source>
        <strain>ATCC 700931 / Ty2</strain>
    </source>
</reference>
<feature type="chain" id="PRO_0000158219" description="Histidine biosynthesis bifunctional protein HisB">
    <location>
        <begin position="1"/>
        <end position="355"/>
    </location>
</feature>
<feature type="region of interest" description="Histidinol-phosphatase" evidence="1">
    <location>
        <begin position="1"/>
        <end position="166"/>
    </location>
</feature>
<feature type="region of interest" description="Imidazoleglycerol-phosphate dehydratase" evidence="1">
    <location>
        <begin position="167"/>
        <end position="355"/>
    </location>
</feature>
<feature type="active site" description="Nucleophile" evidence="1">
    <location>
        <position position="9"/>
    </location>
</feature>
<feature type="active site" description="Proton donor" evidence="1">
    <location>
        <position position="11"/>
    </location>
</feature>
<feature type="binding site" evidence="1">
    <location>
        <position position="9"/>
    </location>
    <ligand>
        <name>Mg(2+)</name>
        <dbReference type="ChEBI" id="CHEBI:18420"/>
    </ligand>
</feature>
<feature type="binding site" evidence="1">
    <location>
        <position position="11"/>
    </location>
    <ligand>
        <name>Mg(2+)</name>
        <dbReference type="ChEBI" id="CHEBI:18420"/>
    </ligand>
</feature>
<feature type="binding site" evidence="1">
    <location>
        <position position="93"/>
    </location>
    <ligand>
        <name>Zn(2+)</name>
        <dbReference type="ChEBI" id="CHEBI:29105"/>
    </ligand>
</feature>
<feature type="binding site" evidence="1">
    <location>
        <position position="95"/>
    </location>
    <ligand>
        <name>Zn(2+)</name>
        <dbReference type="ChEBI" id="CHEBI:29105"/>
    </ligand>
</feature>
<feature type="binding site" evidence="1">
    <location>
        <position position="101"/>
    </location>
    <ligand>
        <name>Zn(2+)</name>
        <dbReference type="ChEBI" id="CHEBI:29105"/>
    </ligand>
</feature>
<feature type="binding site" evidence="1">
    <location>
        <position position="103"/>
    </location>
    <ligand>
        <name>Zn(2+)</name>
        <dbReference type="ChEBI" id="CHEBI:29105"/>
    </ligand>
</feature>
<feature type="binding site" evidence="1">
    <location>
        <position position="130"/>
    </location>
    <ligand>
        <name>Mg(2+)</name>
        <dbReference type="ChEBI" id="CHEBI:18420"/>
    </ligand>
</feature>
<protein>
    <recommendedName>
        <fullName evidence="1">Histidine biosynthesis bifunctional protein HisB</fullName>
    </recommendedName>
    <domain>
        <recommendedName>
            <fullName evidence="1">Histidinol-phosphatase</fullName>
            <ecNumber evidence="1">3.1.3.15</ecNumber>
        </recommendedName>
    </domain>
    <domain>
        <recommendedName>
            <fullName evidence="1">Imidazoleglycerol-phosphate dehydratase</fullName>
            <shortName evidence="1">IGPD</shortName>
            <ecNumber evidence="1">4.2.1.19</ecNumber>
        </recommendedName>
    </domain>
</protein>
<gene>
    <name evidence="1" type="primary">hisB</name>
    <name type="ordered locus">STY2283</name>
    <name type="ordered locus">t0799</name>
</gene>
<dbReference type="EC" id="3.1.3.15" evidence="1"/>
<dbReference type="EC" id="4.2.1.19" evidence="1"/>
<dbReference type="EMBL" id="AL513382">
    <property type="protein sequence ID" value="CAD02436.1"/>
    <property type="molecule type" value="Genomic_DNA"/>
</dbReference>
<dbReference type="EMBL" id="AE014613">
    <property type="protein sequence ID" value="AAO68490.1"/>
    <property type="molecule type" value="Genomic_DNA"/>
</dbReference>
<dbReference type="RefSeq" id="NP_456622.1">
    <property type="nucleotide sequence ID" value="NC_003198.1"/>
</dbReference>
<dbReference type="RefSeq" id="WP_000080040.1">
    <property type="nucleotide sequence ID" value="NZ_WSUR01000002.1"/>
</dbReference>
<dbReference type="SMR" id="Q8Z5J8"/>
<dbReference type="STRING" id="220341.gene:17586191"/>
<dbReference type="KEGG" id="stt:t0799"/>
<dbReference type="KEGG" id="sty:STY2283"/>
<dbReference type="PATRIC" id="fig|220341.7.peg.2303"/>
<dbReference type="eggNOG" id="COG0131">
    <property type="taxonomic scope" value="Bacteria"/>
</dbReference>
<dbReference type="eggNOG" id="COG0241">
    <property type="taxonomic scope" value="Bacteria"/>
</dbReference>
<dbReference type="HOGENOM" id="CLU_044308_0_0_6"/>
<dbReference type="OMA" id="PEDTFWP"/>
<dbReference type="OrthoDB" id="9790411at2"/>
<dbReference type="UniPathway" id="UPA00031">
    <property type="reaction ID" value="UER00011"/>
</dbReference>
<dbReference type="UniPathway" id="UPA00031">
    <property type="reaction ID" value="UER00013"/>
</dbReference>
<dbReference type="Proteomes" id="UP000000541">
    <property type="component" value="Chromosome"/>
</dbReference>
<dbReference type="Proteomes" id="UP000002670">
    <property type="component" value="Chromosome"/>
</dbReference>
<dbReference type="GO" id="GO:0005737">
    <property type="term" value="C:cytoplasm"/>
    <property type="evidence" value="ECO:0007669"/>
    <property type="project" value="UniProtKB-SubCell"/>
</dbReference>
<dbReference type="GO" id="GO:0004401">
    <property type="term" value="F:histidinol-phosphatase activity"/>
    <property type="evidence" value="ECO:0007669"/>
    <property type="project" value="UniProtKB-UniRule"/>
</dbReference>
<dbReference type="GO" id="GO:0004424">
    <property type="term" value="F:imidazoleglycerol-phosphate dehydratase activity"/>
    <property type="evidence" value="ECO:0007669"/>
    <property type="project" value="UniProtKB-UniRule"/>
</dbReference>
<dbReference type="GO" id="GO:0046872">
    <property type="term" value="F:metal ion binding"/>
    <property type="evidence" value="ECO:0007669"/>
    <property type="project" value="UniProtKB-KW"/>
</dbReference>
<dbReference type="GO" id="GO:0000105">
    <property type="term" value="P:L-histidine biosynthetic process"/>
    <property type="evidence" value="ECO:0007669"/>
    <property type="project" value="UniProtKB-UniRule"/>
</dbReference>
<dbReference type="CDD" id="cd07503">
    <property type="entry name" value="HAD_HisB-N"/>
    <property type="match status" value="1"/>
</dbReference>
<dbReference type="CDD" id="cd07914">
    <property type="entry name" value="IGPD"/>
    <property type="match status" value="1"/>
</dbReference>
<dbReference type="FunFam" id="3.40.50.1000:FF:000061">
    <property type="entry name" value="Histidine biosynthesis bifunctional protein HisB"/>
    <property type="match status" value="1"/>
</dbReference>
<dbReference type="FunFam" id="3.30.230.40:FF:000001">
    <property type="entry name" value="Imidazoleglycerol-phosphate dehydratase HisB"/>
    <property type="match status" value="1"/>
</dbReference>
<dbReference type="FunFam" id="3.30.230.40:FF:000003">
    <property type="entry name" value="Imidazoleglycerol-phosphate dehydratase HisB"/>
    <property type="match status" value="1"/>
</dbReference>
<dbReference type="Gene3D" id="3.40.50.1000">
    <property type="entry name" value="HAD superfamily/HAD-like"/>
    <property type="match status" value="1"/>
</dbReference>
<dbReference type="Gene3D" id="3.30.230.40">
    <property type="entry name" value="Imidazole glycerol phosphate dehydratase, domain 1"/>
    <property type="match status" value="2"/>
</dbReference>
<dbReference type="HAMAP" id="MF_01022">
    <property type="entry name" value="Bifunc_HisB"/>
    <property type="match status" value="1"/>
</dbReference>
<dbReference type="HAMAP" id="MF_00076">
    <property type="entry name" value="HisB"/>
    <property type="match status" value="1"/>
</dbReference>
<dbReference type="InterPro" id="IPR036412">
    <property type="entry name" value="HAD-like_sf"/>
</dbReference>
<dbReference type="InterPro" id="IPR006549">
    <property type="entry name" value="HAD-SF_hydro_IIIA"/>
</dbReference>
<dbReference type="InterPro" id="IPR023214">
    <property type="entry name" value="HAD_sf"/>
</dbReference>
<dbReference type="InterPro" id="IPR020566">
    <property type="entry name" value="His_synth_bifunc_HisB"/>
</dbReference>
<dbReference type="InterPro" id="IPR005954">
    <property type="entry name" value="HisB_N"/>
</dbReference>
<dbReference type="InterPro" id="IPR006543">
    <property type="entry name" value="Histidinol-phos"/>
</dbReference>
<dbReference type="InterPro" id="IPR038494">
    <property type="entry name" value="IGPD_sf"/>
</dbReference>
<dbReference type="InterPro" id="IPR000807">
    <property type="entry name" value="ImidazoleglycerolP_deHydtase"/>
</dbReference>
<dbReference type="InterPro" id="IPR020565">
    <property type="entry name" value="ImidazoleglycerP_deHydtase_CS"/>
</dbReference>
<dbReference type="InterPro" id="IPR020568">
    <property type="entry name" value="Ribosomal_Su5_D2-typ_SF"/>
</dbReference>
<dbReference type="NCBIfam" id="TIGR01662">
    <property type="entry name" value="HAD-SF-IIIA"/>
    <property type="match status" value="1"/>
</dbReference>
<dbReference type="NCBIfam" id="TIGR01261">
    <property type="entry name" value="hisB_Nterm"/>
    <property type="match status" value="1"/>
</dbReference>
<dbReference type="NCBIfam" id="TIGR01656">
    <property type="entry name" value="Histidinol-ppas"/>
    <property type="match status" value="1"/>
</dbReference>
<dbReference type="NCBIfam" id="NF002111">
    <property type="entry name" value="PRK00951.2-1"/>
    <property type="match status" value="1"/>
</dbReference>
<dbReference type="NCBIfam" id="NF002114">
    <property type="entry name" value="PRK00951.2-4"/>
    <property type="match status" value="1"/>
</dbReference>
<dbReference type="NCBIfam" id="NF003937">
    <property type="entry name" value="PRK05446.1"/>
    <property type="match status" value="1"/>
</dbReference>
<dbReference type="PANTHER" id="PTHR23133:SF2">
    <property type="entry name" value="IMIDAZOLEGLYCEROL-PHOSPHATE DEHYDRATASE"/>
    <property type="match status" value="1"/>
</dbReference>
<dbReference type="PANTHER" id="PTHR23133">
    <property type="entry name" value="IMIDAZOLEGLYCEROL-PHOSPHATE DEHYDRATASE HIS7"/>
    <property type="match status" value="1"/>
</dbReference>
<dbReference type="Pfam" id="PF13242">
    <property type="entry name" value="Hydrolase_like"/>
    <property type="match status" value="1"/>
</dbReference>
<dbReference type="Pfam" id="PF00475">
    <property type="entry name" value="IGPD"/>
    <property type="match status" value="1"/>
</dbReference>
<dbReference type="SUPFAM" id="SSF56784">
    <property type="entry name" value="HAD-like"/>
    <property type="match status" value="1"/>
</dbReference>
<dbReference type="SUPFAM" id="SSF54211">
    <property type="entry name" value="Ribosomal protein S5 domain 2-like"/>
    <property type="match status" value="2"/>
</dbReference>
<dbReference type="PROSITE" id="PS00954">
    <property type="entry name" value="IGP_DEHYDRATASE_1"/>
    <property type="match status" value="1"/>
</dbReference>
<dbReference type="PROSITE" id="PS00955">
    <property type="entry name" value="IGP_DEHYDRATASE_2"/>
    <property type="match status" value="1"/>
</dbReference>
<comment type="catalytic activity">
    <reaction evidence="1">
        <text>D-erythro-1-(imidazol-4-yl)glycerol 3-phosphate = 3-(imidazol-4-yl)-2-oxopropyl phosphate + H2O</text>
        <dbReference type="Rhea" id="RHEA:11040"/>
        <dbReference type="ChEBI" id="CHEBI:15377"/>
        <dbReference type="ChEBI" id="CHEBI:57766"/>
        <dbReference type="ChEBI" id="CHEBI:58278"/>
        <dbReference type="EC" id="4.2.1.19"/>
    </reaction>
</comment>
<comment type="catalytic activity">
    <reaction evidence="1">
        <text>L-histidinol phosphate + H2O = L-histidinol + phosphate</text>
        <dbReference type="Rhea" id="RHEA:14465"/>
        <dbReference type="ChEBI" id="CHEBI:15377"/>
        <dbReference type="ChEBI" id="CHEBI:43474"/>
        <dbReference type="ChEBI" id="CHEBI:57699"/>
        <dbReference type="ChEBI" id="CHEBI:57980"/>
        <dbReference type="EC" id="3.1.3.15"/>
    </reaction>
</comment>
<comment type="cofactor">
    <cofactor evidence="1">
        <name>Mg(2+)</name>
        <dbReference type="ChEBI" id="CHEBI:18420"/>
    </cofactor>
</comment>
<comment type="cofactor">
    <cofactor evidence="1">
        <name>Zn(2+)</name>
        <dbReference type="ChEBI" id="CHEBI:29105"/>
    </cofactor>
</comment>
<comment type="pathway">
    <text evidence="1">Amino-acid biosynthesis; L-histidine biosynthesis; L-histidine from 5-phospho-alpha-D-ribose 1-diphosphate: step 6/9.</text>
</comment>
<comment type="pathway">
    <text evidence="1">Amino-acid biosynthesis; L-histidine biosynthesis; L-histidine from 5-phospho-alpha-D-ribose 1-diphosphate: step 8/9.</text>
</comment>
<comment type="subcellular location">
    <subcellularLocation>
        <location evidence="1">Cytoplasm</location>
    </subcellularLocation>
</comment>
<comment type="similarity">
    <text evidence="1">In the N-terminal section; belongs to the histidinol-phosphatase family.</text>
</comment>
<comment type="similarity">
    <text evidence="1">In the C-terminal section; belongs to the imidazoleglycerol-phosphate dehydratase family.</text>
</comment>
<proteinExistence type="inferred from homology"/>